<proteinExistence type="inferred from homology"/>
<comment type="similarity">
    <text evidence="1">Belongs to the bacterial ribosomal protein bL27 family.</text>
</comment>
<accession>A9BP69</accession>
<reference key="1">
    <citation type="submission" date="2007-11" db="EMBL/GenBank/DDBJ databases">
        <title>Complete sequence of Delftia acidovorans DSM 14801 / SPH-1.</title>
        <authorList>
            <person name="Copeland A."/>
            <person name="Lucas S."/>
            <person name="Lapidus A."/>
            <person name="Barry K."/>
            <person name="Glavina del Rio T."/>
            <person name="Dalin E."/>
            <person name="Tice H."/>
            <person name="Pitluck S."/>
            <person name="Lowry S."/>
            <person name="Clum A."/>
            <person name="Schmutz J."/>
            <person name="Larimer F."/>
            <person name="Land M."/>
            <person name="Hauser L."/>
            <person name="Kyrpides N."/>
            <person name="Kim E."/>
            <person name="Schleheck D."/>
            <person name="Richardson P."/>
        </authorList>
    </citation>
    <scope>NUCLEOTIDE SEQUENCE [LARGE SCALE GENOMIC DNA]</scope>
    <source>
        <strain>DSM 14801 / SPH-1</strain>
    </source>
</reference>
<dbReference type="EMBL" id="CP000884">
    <property type="protein sequence ID" value="ABX38114.1"/>
    <property type="molecule type" value="Genomic_DNA"/>
</dbReference>
<dbReference type="RefSeq" id="WP_012207283.1">
    <property type="nucleotide sequence ID" value="NC_010002.1"/>
</dbReference>
<dbReference type="SMR" id="A9BP69"/>
<dbReference type="STRING" id="398578.Daci_5485"/>
<dbReference type="GeneID" id="94690511"/>
<dbReference type="KEGG" id="dac:Daci_5485"/>
<dbReference type="eggNOG" id="COG0211">
    <property type="taxonomic scope" value="Bacteria"/>
</dbReference>
<dbReference type="HOGENOM" id="CLU_095424_4_1_4"/>
<dbReference type="Proteomes" id="UP000000784">
    <property type="component" value="Chromosome"/>
</dbReference>
<dbReference type="GO" id="GO:0022625">
    <property type="term" value="C:cytosolic large ribosomal subunit"/>
    <property type="evidence" value="ECO:0007669"/>
    <property type="project" value="TreeGrafter"/>
</dbReference>
<dbReference type="GO" id="GO:0003735">
    <property type="term" value="F:structural constituent of ribosome"/>
    <property type="evidence" value="ECO:0007669"/>
    <property type="project" value="InterPro"/>
</dbReference>
<dbReference type="GO" id="GO:0006412">
    <property type="term" value="P:translation"/>
    <property type="evidence" value="ECO:0007669"/>
    <property type="project" value="UniProtKB-UniRule"/>
</dbReference>
<dbReference type="FunFam" id="2.40.50.100:FF:000020">
    <property type="entry name" value="50S ribosomal protein L27"/>
    <property type="match status" value="1"/>
</dbReference>
<dbReference type="Gene3D" id="2.40.50.100">
    <property type="match status" value="1"/>
</dbReference>
<dbReference type="HAMAP" id="MF_00539">
    <property type="entry name" value="Ribosomal_bL27"/>
    <property type="match status" value="1"/>
</dbReference>
<dbReference type="InterPro" id="IPR001684">
    <property type="entry name" value="Ribosomal_bL27"/>
</dbReference>
<dbReference type="InterPro" id="IPR018261">
    <property type="entry name" value="Ribosomal_bL27_CS"/>
</dbReference>
<dbReference type="NCBIfam" id="TIGR00062">
    <property type="entry name" value="L27"/>
    <property type="match status" value="1"/>
</dbReference>
<dbReference type="PANTHER" id="PTHR15893:SF0">
    <property type="entry name" value="LARGE RIBOSOMAL SUBUNIT PROTEIN BL27M"/>
    <property type="match status" value="1"/>
</dbReference>
<dbReference type="PANTHER" id="PTHR15893">
    <property type="entry name" value="RIBOSOMAL PROTEIN L27"/>
    <property type="match status" value="1"/>
</dbReference>
<dbReference type="Pfam" id="PF01016">
    <property type="entry name" value="Ribosomal_L27"/>
    <property type="match status" value="1"/>
</dbReference>
<dbReference type="PRINTS" id="PR00063">
    <property type="entry name" value="RIBOSOMALL27"/>
</dbReference>
<dbReference type="SUPFAM" id="SSF110324">
    <property type="entry name" value="Ribosomal L27 protein-like"/>
    <property type="match status" value="1"/>
</dbReference>
<dbReference type="PROSITE" id="PS00831">
    <property type="entry name" value="RIBOSOMAL_L27"/>
    <property type="match status" value="1"/>
</dbReference>
<organism>
    <name type="scientific">Delftia acidovorans (strain DSM 14801 / SPH-1)</name>
    <dbReference type="NCBI Taxonomy" id="398578"/>
    <lineage>
        <taxon>Bacteria</taxon>
        <taxon>Pseudomonadati</taxon>
        <taxon>Pseudomonadota</taxon>
        <taxon>Betaproteobacteria</taxon>
        <taxon>Burkholderiales</taxon>
        <taxon>Comamonadaceae</taxon>
        <taxon>Delftia</taxon>
    </lineage>
</organism>
<protein>
    <recommendedName>
        <fullName evidence="1">Large ribosomal subunit protein bL27</fullName>
    </recommendedName>
    <alternativeName>
        <fullName evidence="3">50S ribosomal protein L27</fullName>
    </alternativeName>
</protein>
<keyword id="KW-1185">Reference proteome</keyword>
<keyword id="KW-0687">Ribonucleoprotein</keyword>
<keyword id="KW-0689">Ribosomal protein</keyword>
<name>RL27_DELAS</name>
<feature type="chain" id="PRO_1000128732" description="Large ribosomal subunit protein bL27">
    <location>
        <begin position="1"/>
        <end position="85"/>
    </location>
</feature>
<feature type="region of interest" description="Disordered" evidence="2">
    <location>
        <begin position="1"/>
        <end position="20"/>
    </location>
</feature>
<feature type="compositionally biased region" description="Gly residues" evidence="2">
    <location>
        <begin position="1"/>
        <end position="10"/>
    </location>
</feature>
<gene>
    <name evidence="1" type="primary">rpmA</name>
    <name type="ordered locus">Daci_5485</name>
</gene>
<sequence>MAQKKGGGSTRNGRDSKPKMLGVKAFGGELITAGSIIVRQRGTKFHPGDNVGVGKDHTLYALVDGHVSFAVKGALSKHTVNVTAA</sequence>
<evidence type="ECO:0000255" key="1">
    <source>
        <dbReference type="HAMAP-Rule" id="MF_00539"/>
    </source>
</evidence>
<evidence type="ECO:0000256" key="2">
    <source>
        <dbReference type="SAM" id="MobiDB-lite"/>
    </source>
</evidence>
<evidence type="ECO:0000305" key="3"/>